<comment type="function">
    <text evidence="1">Involved in cyanogenesis, the release of HCN from injured tissues. Catalyzes the stereospecific addition of HCN to a variety of aldehydes in vitro. It is a major seed constituent, and could have the additional role of a storage form for reduced nitrogen (By similarity).</text>
</comment>
<comment type="catalytic activity">
    <reaction>
        <text>(R)-mandelonitrile = benzaldehyde + hydrogen cyanide</text>
        <dbReference type="Rhea" id="RHEA:18313"/>
        <dbReference type="ChEBI" id="CHEBI:17169"/>
        <dbReference type="ChEBI" id="CHEBI:18407"/>
        <dbReference type="ChEBI" id="CHEBI:18450"/>
        <dbReference type="EC" id="4.1.2.10"/>
    </reaction>
</comment>
<comment type="cofactor">
    <cofactor evidence="1">
        <name>FAD</name>
        <dbReference type="ChEBI" id="CHEBI:57692"/>
    </cofactor>
</comment>
<comment type="subunit">
    <text evidence="1">Monomer.</text>
</comment>
<comment type="subcellular location">
    <subcellularLocation>
        <location evidence="1">Vacuole</location>
        <location evidence="1">Aleurone grain</location>
    </subcellularLocation>
    <text evidence="1">Primarily found within protein bodies of the cotyledonary parenchyma cells, with lesser amounts within the procambium.</text>
</comment>
<comment type="similarity">
    <text evidence="3">Belongs to the GMC oxidoreductase family.</text>
</comment>
<keyword id="KW-1015">Disulfide bond</keyword>
<keyword id="KW-0274">FAD</keyword>
<keyword id="KW-0285">Flavoprotein</keyword>
<keyword id="KW-0325">Glycoprotein</keyword>
<keyword id="KW-0456">Lyase</keyword>
<keyword id="KW-0732">Signal</keyword>
<keyword id="KW-0926">Vacuole</keyword>
<sequence length="574" mass="61682">MEKSTMSAVVLVLNLLVLHLQYSEVHSLANTSSEHDFGYLKFVYNAVDLELEGSYDYIIVGGGTSGCPLAATLSANYSVLVLERGTIATEYPNTLTVDGFAYNLQQQDDGKTPVERFVSEDGIDNVRSRILGGTTIINAGVYARANESFYNNSGVEWDLDLVNEAYEWVEDAIVYKPSNQSWQSITGTAFLEAGVHPDNGFGLVHEEGTRLTGSTFDNSGTRHASDELLNKGDPDNLKVAVEAAVQKIIFSTESSGLTAVGVVYTDSNGTSHRALVSGKGEVILSAGTLGTPQLLLLSGVGPESYLTSLNISVVASHPYVGQYVNDNPRNFINILPPNPIEPSTVTVLGITSDFYQCSLSSLPFDTPPFSLFPTTSYPLPNQTFAHIVSKVPGPLSAGSLTLQSSSNVSVAPNVKFNYCSDPVDLTHCVSGMKKIGVFLSTDALKPYKVDDLPGIDGFNILGTPLPENQTDDAAFEKFCRDTVASYWHYHGGAIVGKVIDGNFRVTGINALRVVDGSTFPATPASHPQGFYLMLGRYVGTKIVQERSASGEAIHTSTFKPKLMDSLKSALSFAF</sequence>
<proteinExistence type="evidence at transcript level"/>
<feature type="signal peptide" evidence="2">
    <location>
        <begin position="1"/>
        <end position="27"/>
    </location>
</feature>
<feature type="chain" id="PRO_0000012343" description="(R)-mandelonitrile lyase 4">
    <location>
        <begin position="28"/>
        <end position="574"/>
    </location>
</feature>
<feature type="active site" description="Proton donor" evidence="1">
    <location>
        <position position="488"/>
    </location>
</feature>
<feature type="active site" description="Proton acceptor" evidence="1">
    <location>
        <position position="526"/>
    </location>
</feature>
<feature type="binding site" evidence="1">
    <location>
        <begin position="64"/>
        <end position="65"/>
    </location>
    <ligand>
        <name>FAD</name>
        <dbReference type="ChEBI" id="CHEBI:57692"/>
    </ligand>
</feature>
<feature type="binding site" evidence="1">
    <location>
        <begin position="83"/>
        <end position="84"/>
    </location>
    <ligand>
        <name>FAD</name>
        <dbReference type="ChEBI" id="CHEBI:57692"/>
    </ligand>
</feature>
<feature type="binding site" evidence="1">
    <location>
        <position position="134"/>
    </location>
    <ligand>
        <name>FAD</name>
        <dbReference type="ChEBI" id="CHEBI:57692"/>
    </ligand>
</feature>
<feature type="binding site" evidence="1">
    <location>
        <begin position="138"/>
        <end position="141"/>
    </location>
    <ligand>
        <name>FAD</name>
        <dbReference type="ChEBI" id="CHEBI:57692"/>
    </ligand>
</feature>
<feature type="binding site" evidence="1">
    <location>
        <position position="245"/>
    </location>
    <ligand>
        <name>FAD</name>
        <dbReference type="ChEBI" id="CHEBI:57692"/>
    </ligand>
</feature>
<feature type="binding site" evidence="1">
    <location>
        <position position="357"/>
    </location>
    <ligand>
        <name>substrate</name>
    </ligand>
</feature>
<feature type="binding site" evidence="1">
    <location>
        <position position="486"/>
    </location>
    <ligand>
        <name>substrate</name>
    </ligand>
</feature>
<feature type="binding site" evidence="1">
    <location>
        <begin position="487"/>
        <end position="488"/>
    </location>
    <ligand>
        <name>FAD</name>
        <dbReference type="ChEBI" id="CHEBI:57692"/>
    </ligand>
</feature>
<feature type="binding site" evidence="1">
    <location>
        <position position="516"/>
    </location>
    <ligand>
        <name>FAD</name>
        <dbReference type="ChEBI" id="CHEBI:57692"/>
    </ligand>
</feature>
<feature type="binding site" evidence="1">
    <location>
        <begin position="527"/>
        <end position="528"/>
    </location>
    <ligand>
        <name>FAD</name>
        <dbReference type="ChEBI" id="CHEBI:57692"/>
    </ligand>
</feature>
<feature type="glycosylation site" description="N-linked (GlcNAc...) asparagine" evidence="2">
    <location>
        <position position="30"/>
    </location>
</feature>
<feature type="glycosylation site" description="N-linked (GlcNAc...) asparagine" evidence="2">
    <location>
        <position position="76"/>
    </location>
</feature>
<feature type="glycosylation site" description="N-linked (GlcNAc...) asparagine" evidence="2">
    <location>
        <position position="146"/>
    </location>
</feature>
<feature type="glycosylation site" description="N-linked (GlcNAc...) asparagine" evidence="2">
    <location>
        <position position="151"/>
    </location>
</feature>
<feature type="glycosylation site" description="N-linked (GlcNAc...) asparagine" evidence="2">
    <location>
        <position position="179"/>
    </location>
</feature>
<feature type="glycosylation site" description="N-linked (GlcNAc...) asparagine" evidence="2">
    <location>
        <position position="268"/>
    </location>
</feature>
<feature type="glycosylation site" description="N-linked (GlcNAc...) asparagine" evidence="2">
    <location>
        <position position="310"/>
    </location>
</feature>
<feature type="glycosylation site" description="N-linked (GlcNAc...) asparagine" evidence="2">
    <location>
        <position position="381"/>
    </location>
</feature>
<feature type="glycosylation site" description="N-linked (GlcNAc...) asparagine" evidence="2">
    <location>
        <position position="407"/>
    </location>
</feature>
<feature type="glycosylation site" description="N-linked (GlcNAc...) asparagine" evidence="2">
    <location>
        <position position="468"/>
    </location>
</feature>
<feature type="disulfide bond" evidence="1">
    <location>
        <begin position="428"/>
        <end position="479"/>
    </location>
</feature>
<dbReference type="EC" id="4.1.2.10"/>
<dbReference type="EMBL" id="AF043186">
    <property type="protein sequence ID" value="AAD02265.1"/>
    <property type="molecule type" value="mRNA"/>
</dbReference>
<dbReference type="EMBL" id="AF043187">
    <property type="protein sequence ID" value="AAD02266.1"/>
    <property type="molecule type" value="Genomic_DNA"/>
</dbReference>
<dbReference type="EMBL" id="AF053884">
    <property type="protein sequence ID" value="AAC61980.1"/>
    <property type="molecule type" value="mRNA"/>
</dbReference>
<dbReference type="EMBL" id="AF053885">
    <property type="protein sequence ID" value="AAC61981.1"/>
    <property type="molecule type" value="Genomic_DNA"/>
</dbReference>
<dbReference type="PIR" id="T50766">
    <property type="entry name" value="T50766"/>
</dbReference>
<dbReference type="SMR" id="O82784"/>
<dbReference type="GlyCosmos" id="O82784">
    <property type="glycosylation" value="10 sites, No reported glycans"/>
</dbReference>
<dbReference type="SABIO-RK" id="O82784"/>
<dbReference type="GO" id="GO:0033095">
    <property type="term" value="C:aleurone grain"/>
    <property type="evidence" value="ECO:0007669"/>
    <property type="project" value="UniProtKB-SubCell"/>
</dbReference>
<dbReference type="GO" id="GO:0005773">
    <property type="term" value="C:vacuole"/>
    <property type="evidence" value="ECO:0007669"/>
    <property type="project" value="UniProtKB-KW"/>
</dbReference>
<dbReference type="GO" id="GO:0050660">
    <property type="term" value="F:flavin adenine dinucleotide binding"/>
    <property type="evidence" value="ECO:0007669"/>
    <property type="project" value="InterPro"/>
</dbReference>
<dbReference type="GO" id="GO:0046593">
    <property type="term" value="F:mandelonitrile lyase activity"/>
    <property type="evidence" value="ECO:0007669"/>
    <property type="project" value="UniProtKB-EC"/>
</dbReference>
<dbReference type="GO" id="GO:0016614">
    <property type="term" value="F:oxidoreductase activity, acting on CH-OH group of donors"/>
    <property type="evidence" value="ECO:0007669"/>
    <property type="project" value="InterPro"/>
</dbReference>
<dbReference type="Gene3D" id="3.30.410.40">
    <property type="match status" value="1"/>
</dbReference>
<dbReference type="Gene3D" id="3.50.50.60">
    <property type="entry name" value="FAD/NAD(P)-binding domain"/>
    <property type="match status" value="1"/>
</dbReference>
<dbReference type="InterPro" id="IPR036188">
    <property type="entry name" value="FAD/NAD-bd_sf"/>
</dbReference>
<dbReference type="InterPro" id="IPR051871">
    <property type="entry name" value="GMC_Oxidoreductase-Related"/>
</dbReference>
<dbReference type="InterPro" id="IPR012132">
    <property type="entry name" value="GMC_OxRdtase"/>
</dbReference>
<dbReference type="InterPro" id="IPR000172">
    <property type="entry name" value="GMC_OxRdtase_N"/>
</dbReference>
<dbReference type="InterPro" id="IPR007867">
    <property type="entry name" value="GMC_OxRtase_C"/>
</dbReference>
<dbReference type="PANTHER" id="PTHR45968:SF23">
    <property type="entry name" value="GLUCOSE-METHANOL-CHOLINE OXIDOREDUCTASE N-TERMINAL DOMAIN-CONTAINING PROTEIN"/>
    <property type="match status" value="1"/>
</dbReference>
<dbReference type="PANTHER" id="PTHR45968">
    <property type="entry name" value="OSJNBA0019K04.7 PROTEIN"/>
    <property type="match status" value="1"/>
</dbReference>
<dbReference type="Pfam" id="PF05199">
    <property type="entry name" value="GMC_oxred_C"/>
    <property type="match status" value="1"/>
</dbReference>
<dbReference type="Pfam" id="PF00732">
    <property type="entry name" value="GMC_oxred_N"/>
    <property type="match status" value="1"/>
</dbReference>
<dbReference type="PIRSF" id="PIRSF000137">
    <property type="entry name" value="Alcohol_oxidase"/>
    <property type="match status" value="1"/>
</dbReference>
<dbReference type="SUPFAM" id="SSF54373">
    <property type="entry name" value="FAD-linked reductases, C-terminal domain"/>
    <property type="match status" value="1"/>
</dbReference>
<dbReference type="SUPFAM" id="SSF51905">
    <property type="entry name" value="FAD/NAD(P)-binding domain"/>
    <property type="match status" value="1"/>
</dbReference>
<dbReference type="PROSITE" id="PS00624">
    <property type="entry name" value="GMC_OXRED_2"/>
    <property type="match status" value="1"/>
</dbReference>
<organism>
    <name type="scientific">Prunus serotina</name>
    <name type="common">Black cherry</name>
    <dbReference type="NCBI Taxonomy" id="23207"/>
    <lineage>
        <taxon>Eukaryota</taxon>
        <taxon>Viridiplantae</taxon>
        <taxon>Streptophyta</taxon>
        <taxon>Embryophyta</taxon>
        <taxon>Tracheophyta</taxon>
        <taxon>Spermatophyta</taxon>
        <taxon>Magnoliopsida</taxon>
        <taxon>eudicotyledons</taxon>
        <taxon>Gunneridae</taxon>
        <taxon>Pentapetalae</taxon>
        <taxon>rosids</taxon>
        <taxon>fabids</taxon>
        <taxon>Rosales</taxon>
        <taxon>Rosaceae</taxon>
        <taxon>Amygdaloideae</taxon>
        <taxon>Amygdaleae</taxon>
        <taxon>Prunus</taxon>
    </lineage>
</organism>
<evidence type="ECO:0000250" key="1"/>
<evidence type="ECO:0000255" key="2"/>
<evidence type="ECO:0000305" key="3"/>
<name>MDL4_PRUSE</name>
<protein>
    <recommendedName>
        <fullName>(R)-mandelonitrile lyase 4</fullName>
        <ecNumber>4.1.2.10</ecNumber>
    </recommendedName>
    <alternativeName>
        <fullName>Hydroxynitrile lyase 4</fullName>
        <shortName>(R)-oxynitrilase 4</shortName>
    </alternativeName>
</protein>
<accession>O82784</accession>
<gene>
    <name type="primary">MDL4</name>
</gene>
<reference key="1">
    <citation type="submission" date="1998-03" db="EMBL/GenBank/DDBJ databases">
        <authorList>
            <person name="Hu Z."/>
            <person name="Poulton J.E."/>
        </authorList>
    </citation>
    <scope>NUCLEOTIDE SEQUENCE [GENOMIC DNA / MRNA]</scope>
</reference>